<protein>
    <recommendedName>
        <fullName evidence="1">DNA ligase</fullName>
        <ecNumber evidence="1">6.5.1.2</ecNumber>
    </recommendedName>
    <alternativeName>
        <fullName evidence="1">Polydeoxyribonucleotide synthase [NAD(+)]</fullName>
    </alternativeName>
</protein>
<accession>Q8RI94</accession>
<gene>
    <name evidence="1" type="primary">ligA</name>
    <name type="ordered locus">FN1717</name>
</gene>
<keyword id="KW-0227">DNA damage</keyword>
<keyword id="KW-0234">DNA repair</keyword>
<keyword id="KW-0235">DNA replication</keyword>
<keyword id="KW-0436">Ligase</keyword>
<keyword id="KW-0460">Magnesium</keyword>
<keyword id="KW-0464">Manganese</keyword>
<keyword id="KW-0479">Metal-binding</keyword>
<keyword id="KW-0520">NAD</keyword>
<keyword id="KW-1185">Reference proteome</keyword>
<keyword id="KW-0862">Zinc</keyword>
<comment type="function">
    <text evidence="1">DNA ligase that catalyzes the formation of phosphodiester linkages between 5'-phosphoryl and 3'-hydroxyl groups in double-stranded DNA using NAD as a coenzyme and as the energy source for the reaction. It is essential for DNA replication and repair of damaged DNA.</text>
</comment>
<comment type="catalytic activity">
    <reaction evidence="1">
        <text>NAD(+) + (deoxyribonucleotide)n-3'-hydroxyl + 5'-phospho-(deoxyribonucleotide)m = (deoxyribonucleotide)n+m + AMP + beta-nicotinamide D-nucleotide.</text>
        <dbReference type="EC" id="6.5.1.2"/>
    </reaction>
</comment>
<comment type="cofactor">
    <cofactor evidence="1">
        <name>Mg(2+)</name>
        <dbReference type="ChEBI" id="CHEBI:18420"/>
    </cofactor>
    <cofactor evidence="1">
        <name>Mn(2+)</name>
        <dbReference type="ChEBI" id="CHEBI:29035"/>
    </cofactor>
</comment>
<comment type="similarity">
    <text evidence="1">Belongs to the NAD-dependent DNA ligase family. LigA subfamily.</text>
</comment>
<sequence length="696" mass="79396">MEIKKRIEELKNNQTGLTFYSSQELNDLEKIVKLREDLNKYRDSYYNDNKSLISDYEFDILLKELESLEEKYPQYKEISSPTTSVGASLKENKFKKVEHLHPMLSLANSYNIGEIVEFIERIKKKIPKEQELKYCLEVKLDGLSISLTYRQGKLVRAVTRGDGFIGEDVTENILEIASIVKTLPQAIDMEIRGEVVLPLASFEKLNNERLEKGEELFANPRNAASGTLRQLDSKIVKDRGLDAYFYFLVEADKLGLKSHSESIKFLESMGIKTTGIFELLETSKDIEKRINYWEKERESLPYETDGLVIKVDEINLWDEIGYTSKTPRWAIAYKFPAHQVSTVLNDVTWQVGRTGKLTPVAELQEVELSGSKVKRASLHNISEIQRKDIRIGDRVFIEKAAEIIPQVVKAIKEERTGNEKVIEEPTCCPICNHKLEREEGLVDIKCINEECPAKVQGEIEYFVSRDALNIMGLGSKIVEKFIDLGYIKTVVDIFDLKNHREALENIDKMGKKSIENLLNSIEESKNRDYDKILYALGIAEIGKVTSKILAKASKNIDKLMAMTFEDLTSIEGIGEIAANEIIAFFTKEKNQKIIQGLKEKGLKFEIKESEASVQNVNPNFVGKNFLFTGTLKHFTREQIKEEIEKLGGKNLSSVSKNLDYLIVGEKAGSKLKKAQEIPTIKILTEEEFIELKDKFD</sequence>
<evidence type="ECO:0000255" key="1">
    <source>
        <dbReference type="HAMAP-Rule" id="MF_01588"/>
    </source>
</evidence>
<reference key="1">
    <citation type="journal article" date="2002" name="J. Bacteriol.">
        <title>Genome sequence and analysis of the oral bacterium Fusobacterium nucleatum strain ATCC 25586.</title>
        <authorList>
            <person name="Kapatral V."/>
            <person name="Anderson I."/>
            <person name="Ivanova N."/>
            <person name="Reznik G."/>
            <person name="Los T."/>
            <person name="Lykidis A."/>
            <person name="Bhattacharyya A."/>
            <person name="Bartman A."/>
            <person name="Gardner W."/>
            <person name="Grechkin G."/>
            <person name="Zhu L."/>
            <person name="Vasieva O."/>
            <person name="Chu L."/>
            <person name="Kogan Y."/>
            <person name="Chaga O."/>
            <person name="Goltsman E."/>
            <person name="Bernal A."/>
            <person name="Larsen N."/>
            <person name="D'Souza M."/>
            <person name="Walunas T."/>
            <person name="Pusch G."/>
            <person name="Haselkorn R."/>
            <person name="Fonstein M."/>
            <person name="Kyrpides N.C."/>
            <person name="Overbeek R."/>
        </authorList>
    </citation>
    <scope>NUCLEOTIDE SEQUENCE [LARGE SCALE GENOMIC DNA]</scope>
    <source>
        <strain>ATCC 25586 / DSM 15643 / BCRC 10681 / CIP 101130 / JCM 8532 / KCTC 2640 / LMG 13131 / VPI 4355</strain>
    </source>
</reference>
<organism>
    <name type="scientific">Fusobacterium nucleatum subsp. nucleatum (strain ATCC 25586 / DSM 15643 / BCRC 10681 / CIP 101130 / JCM 8532 / KCTC 2640 / LMG 13131 / VPI 4355)</name>
    <dbReference type="NCBI Taxonomy" id="190304"/>
    <lineage>
        <taxon>Bacteria</taxon>
        <taxon>Fusobacteriati</taxon>
        <taxon>Fusobacteriota</taxon>
        <taxon>Fusobacteriia</taxon>
        <taxon>Fusobacteriales</taxon>
        <taxon>Fusobacteriaceae</taxon>
        <taxon>Fusobacterium</taxon>
    </lineage>
</organism>
<name>DNLJ_FUSNN</name>
<feature type="chain" id="PRO_0000313246" description="DNA ligase">
    <location>
        <begin position="1"/>
        <end position="696"/>
    </location>
</feature>
<feature type="domain" description="BRCT" evidence="1">
    <location>
        <begin position="615"/>
        <end position="696"/>
    </location>
</feature>
<feature type="active site" description="N6-AMP-lysine intermediate" evidence="1">
    <location>
        <position position="139"/>
    </location>
</feature>
<feature type="binding site" evidence="1">
    <location>
        <begin position="55"/>
        <end position="59"/>
    </location>
    <ligand>
        <name>NAD(+)</name>
        <dbReference type="ChEBI" id="CHEBI:57540"/>
    </ligand>
</feature>
<feature type="binding site" evidence="1">
    <location>
        <begin position="105"/>
        <end position="106"/>
    </location>
    <ligand>
        <name>NAD(+)</name>
        <dbReference type="ChEBI" id="CHEBI:57540"/>
    </ligand>
</feature>
<feature type="binding site" evidence="1">
    <location>
        <position position="137"/>
    </location>
    <ligand>
        <name>NAD(+)</name>
        <dbReference type="ChEBI" id="CHEBI:57540"/>
    </ligand>
</feature>
<feature type="binding site" evidence="1">
    <location>
        <position position="160"/>
    </location>
    <ligand>
        <name>NAD(+)</name>
        <dbReference type="ChEBI" id="CHEBI:57540"/>
    </ligand>
</feature>
<feature type="binding site" evidence="1">
    <location>
        <position position="194"/>
    </location>
    <ligand>
        <name>NAD(+)</name>
        <dbReference type="ChEBI" id="CHEBI:57540"/>
    </ligand>
</feature>
<feature type="binding site" evidence="1">
    <location>
        <position position="310"/>
    </location>
    <ligand>
        <name>NAD(+)</name>
        <dbReference type="ChEBI" id="CHEBI:57540"/>
    </ligand>
</feature>
<feature type="binding site" evidence="1">
    <location>
        <position position="334"/>
    </location>
    <ligand>
        <name>NAD(+)</name>
        <dbReference type="ChEBI" id="CHEBI:57540"/>
    </ligand>
</feature>
<feature type="binding site" evidence="1">
    <location>
        <position position="428"/>
    </location>
    <ligand>
        <name>Zn(2+)</name>
        <dbReference type="ChEBI" id="CHEBI:29105"/>
    </ligand>
</feature>
<feature type="binding site" evidence="1">
    <location>
        <position position="431"/>
    </location>
    <ligand>
        <name>Zn(2+)</name>
        <dbReference type="ChEBI" id="CHEBI:29105"/>
    </ligand>
</feature>
<feature type="binding site" evidence="1">
    <location>
        <position position="446"/>
    </location>
    <ligand>
        <name>Zn(2+)</name>
        <dbReference type="ChEBI" id="CHEBI:29105"/>
    </ligand>
</feature>
<feature type="binding site" evidence="1">
    <location>
        <position position="451"/>
    </location>
    <ligand>
        <name>Zn(2+)</name>
        <dbReference type="ChEBI" id="CHEBI:29105"/>
    </ligand>
</feature>
<proteinExistence type="inferred from homology"/>
<dbReference type="EC" id="6.5.1.2" evidence="1"/>
<dbReference type="EMBL" id="AE009951">
    <property type="protein sequence ID" value="AAL93832.1"/>
    <property type="molecule type" value="Genomic_DNA"/>
</dbReference>
<dbReference type="RefSeq" id="NP_602533.1">
    <property type="nucleotide sequence ID" value="NC_003454.1"/>
</dbReference>
<dbReference type="RefSeq" id="WP_011015784.1">
    <property type="nucleotide sequence ID" value="NZ_CP028101.1"/>
</dbReference>
<dbReference type="SMR" id="Q8RI94"/>
<dbReference type="FunCoup" id="Q8RI94">
    <property type="interactions" value="276"/>
</dbReference>
<dbReference type="STRING" id="190304.FN1717"/>
<dbReference type="PaxDb" id="190304-FN1717"/>
<dbReference type="EnsemblBacteria" id="AAL93832">
    <property type="protein sequence ID" value="AAL93832"/>
    <property type="gene ID" value="FN1717"/>
</dbReference>
<dbReference type="GeneID" id="79782649"/>
<dbReference type="KEGG" id="fnu:FN1717"/>
<dbReference type="PATRIC" id="fig|190304.8.peg.206"/>
<dbReference type="eggNOG" id="COG0272">
    <property type="taxonomic scope" value="Bacteria"/>
</dbReference>
<dbReference type="HOGENOM" id="CLU_007764_2_1_0"/>
<dbReference type="InParanoid" id="Q8RI94"/>
<dbReference type="BioCyc" id="FNUC190304:G1FZS-217-MONOMER"/>
<dbReference type="Proteomes" id="UP000002521">
    <property type="component" value="Chromosome"/>
</dbReference>
<dbReference type="GO" id="GO:0005829">
    <property type="term" value="C:cytosol"/>
    <property type="evidence" value="ECO:0000318"/>
    <property type="project" value="GO_Central"/>
</dbReference>
<dbReference type="GO" id="GO:0003677">
    <property type="term" value="F:DNA binding"/>
    <property type="evidence" value="ECO:0007669"/>
    <property type="project" value="InterPro"/>
</dbReference>
<dbReference type="GO" id="GO:0003911">
    <property type="term" value="F:DNA ligase (NAD+) activity"/>
    <property type="evidence" value="ECO:0000318"/>
    <property type="project" value="GO_Central"/>
</dbReference>
<dbReference type="GO" id="GO:0046872">
    <property type="term" value="F:metal ion binding"/>
    <property type="evidence" value="ECO:0007669"/>
    <property type="project" value="UniProtKB-KW"/>
</dbReference>
<dbReference type="GO" id="GO:0006281">
    <property type="term" value="P:DNA repair"/>
    <property type="evidence" value="ECO:0007669"/>
    <property type="project" value="UniProtKB-KW"/>
</dbReference>
<dbReference type="GO" id="GO:0006260">
    <property type="term" value="P:DNA replication"/>
    <property type="evidence" value="ECO:0007669"/>
    <property type="project" value="UniProtKB-KW"/>
</dbReference>
<dbReference type="CDD" id="cd17748">
    <property type="entry name" value="BRCT_DNA_ligase_like"/>
    <property type="match status" value="1"/>
</dbReference>
<dbReference type="CDD" id="cd00114">
    <property type="entry name" value="LIGANc"/>
    <property type="match status" value="1"/>
</dbReference>
<dbReference type="FunFam" id="1.10.150.20:FF:000007">
    <property type="entry name" value="DNA ligase"/>
    <property type="match status" value="1"/>
</dbReference>
<dbReference type="FunFam" id="2.40.50.140:FF:000012">
    <property type="entry name" value="DNA ligase"/>
    <property type="match status" value="1"/>
</dbReference>
<dbReference type="FunFam" id="3.30.470.30:FF:000001">
    <property type="entry name" value="DNA ligase"/>
    <property type="match status" value="1"/>
</dbReference>
<dbReference type="FunFam" id="3.40.50.10190:FF:000054">
    <property type="entry name" value="DNA ligase"/>
    <property type="match status" value="1"/>
</dbReference>
<dbReference type="Gene3D" id="6.20.10.30">
    <property type="match status" value="1"/>
</dbReference>
<dbReference type="Gene3D" id="1.10.150.20">
    <property type="entry name" value="5' to 3' exonuclease, C-terminal subdomain"/>
    <property type="match status" value="2"/>
</dbReference>
<dbReference type="Gene3D" id="3.40.50.10190">
    <property type="entry name" value="BRCT domain"/>
    <property type="match status" value="1"/>
</dbReference>
<dbReference type="Gene3D" id="3.30.470.30">
    <property type="entry name" value="DNA ligase/mRNA capping enzyme"/>
    <property type="match status" value="1"/>
</dbReference>
<dbReference type="Gene3D" id="1.10.287.610">
    <property type="entry name" value="Helix hairpin bin"/>
    <property type="match status" value="1"/>
</dbReference>
<dbReference type="Gene3D" id="2.40.50.140">
    <property type="entry name" value="Nucleic acid-binding proteins"/>
    <property type="match status" value="1"/>
</dbReference>
<dbReference type="HAMAP" id="MF_01588">
    <property type="entry name" value="DNA_ligase_A"/>
    <property type="match status" value="1"/>
</dbReference>
<dbReference type="InterPro" id="IPR001357">
    <property type="entry name" value="BRCT_dom"/>
</dbReference>
<dbReference type="InterPro" id="IPR036420">
    <property type="entry name" value="BRCT_dom_sf"/>
</dbReference>
<dbReference type="InterPro" id="IPR041663">
    <property type="entry name" value="DisA/LigA_HHH"/>
</dbReference>
<dbReference type="InterPro" id="IPR001679">
    <property type="entry name" value="DNA_ligase"/>
</dbReference>
<dbReference type="InterPro" id="IPR018239">
    <property type="entry name" value="DNA_ligase_AS"/>
</dbReference>
<dbReference type="InterPro" id="IPR013839">
    <property type="entry name" value="DNAligase_adenylation"/>
</dbReference>
<dbReference type="InterPro" id="IPR013840">
    <property type="entry name" value="DNAligase_N"/>
</dbReference>
<dbReference type="InterPro" id="IPR003583">
    <property type="entry name" value="Hlx-hairpin-Hlx_DNA-bd_motif"/>
</dbReference>
<dbReference type="InterPro" id="IPR012340">
    <property type="entry name" value="NA-bd_OB-fold"/>
</dbReference>
<dbReference type="InterPro" id="IPR004150">
    <property type="entry name" value="NAD_DNA_ligase_OB"/>
</dbReference>
<dbReference type="InterPro" id="IPR010994">
    <property type="entry name" value="RuvA_2-like"/>
</dbReference>
<dbReference type="InterPro" id="IPR004149">
    <property type="entry name" value="Znf_DNAligase_C4"/>
</dbReference>
<dbReference type="NCBIfam" id="TIGR00575">
    <property type="entry name" value="dnlj"/>
    <property type="match status" value="1"/>
</dbReference>
<dbReference type="NCBIfam" id="NF005932">
    <property type="entry name" value="PRK07956.1"/>
    <property type="match status" value="1"/>
</dbReference>
<dbReference type="PANTHER" id="PTHR23389">
    <property type="entry name" value="CHROMOSOME TRANSMISSION FIDELITY FACTOR 18"/>
    <property type="match status" value="1"/>
</dbReference>
<dbReference type="PANTHER" id="PTHR23389:SF9">
    <property type="entry name" value="DNA LIGASE"/>
    <property type="match status" value="1"/>
</dbReference>
<dbReference type="Pfam" id="PF00533">
    <property type="entry name" value="BRCT"/>
    <property type="match status" value="1"/>
</dbReference>
<dbReference type="Pfam" id="PF01653">
    <property type="entry name" value="DNA_ligase_aden"/>
    <property type="match status" value="1"/>
</dbReference>
<dbReference type="Pfam" id="PF03120">
    <property type="entry name" value="DNA_ligase_OB"/>
    <property type="match status" value="1"/>
</dbReference>
<dbReference type="Pfam" id="PF03119">
    <property type="entry name" value="DNA_ligase_ZBD"/>
    <property type="match status" value="1"/>
</dbReference>
<dbReference type="Pfam" id="PF12826">
    <property type="entry name" value="HHH_2"/>
    <property type="match status" value="1"/>
</dbReference>
<dbReference type="PIRSF" id="PIRSF001604">
    <property type="entry name" value="LigA"/>
    <property type="match status" value="1"/>
</dbReference>
<dbReference type="SMART" id="SM00292">
    <property type="entry name" value="BRCT"/>
    <property type="match status" value="1"/>
</dbReference>
<dbReference type="SMART" id="SM00278">
    <property type="entry name" value="HhH1"/>
    <property type="match status" value="3"/>
</dbReference>
<dbReference type="SMART" id="SM00532">
    <property type="entry name" value="LIGANc"/>
    <property type="match status" value="1"/>
</dbReference>
<dbReference type="SUPFAM" id="SSF52113">
    <property type="entry name" value="BRCT domain"/>
    <property type="match status" value="1"/>
</dbReference>
<dbReference type="SUPFAM" id="SSF56091">
    <property type="entry name" value="DNA ligase/mRNA capping enzyme, catalytic domain"/>
    <property type="match status" value="1"/>
</dbReference>
<dbReference type="SUPFAM" id="SSF50249">
    <property type="entry name" value="Nucleic acid-binding proteins"/>
    <property type="match status" value="1"/>
</dbReference>
<dbReference type="SUPFAM" id="SSF47781">
    <property type="entry name" value="RuvA domain 2-like"/>
    <property type="match status" value="1"/>
</dbReference>
<dbReference type="PROSITE" id="PS50172">
    <property type="entry name" value="BRCT"/>
    <property type="match status" value="1"/>
</dbReference>
<dbReference type="PROSITE" id="PS01055">
    <property type="entry name" value="DNA_LIGASE_N1"/>
    <property type="match status" value="1"/>
</dbReference>